<proteinExistence type="inferred from homology"/>
<sequence>MRLVFAGTPEPALASLRRLIESPSHDVIAVLTRPDAASGRRGKPQPSPVAREAAERGIPVLRPSRPNSAEFVAELSDLAPECCAVVAYGALLGGPLLAVPPHGWVNLHFSLLPAWRGAAPVQAAIAAGDTITGATTFQIEPSLDSGPIYGVVTEVIQPTDTAGDLLKRLAVSGAALLSTTLDGIADQRLTPRPQPADGVSVAPKITVANARVRWDLPAAVVERRIRAVTPNPGAWTLIGDLRVKLGPVHLDAAHRPSKPLPPGGIHVERTSVWIGTGSEPVRLGQIQPPGKKLMNAADWARGARLDLAARAT</sequence>
<feature type="chain" id="PRO_1000020099" description="Methionyl-tRNA formyltransferase">
    <location>
        <begin position="1"/>
        <end position="312"/>
    </location>
</feature>
<feature type="region of interest" description="Disordered" evidence="2">
    <location>
        <begin position="34"/>
        <end position="54"/>
    </location>
</feature>
<feature type="binding site" evidence="1">
    <location>
        <begin position="110"/>
        <end position="113"/>
    </location>
    <ligand>
        <name>(6S)-5,6,7,8-tetrahydrofolate</name>
        <dbReference type="ChEBI" id="CHEBI:57453"/>
    </ligand>
</feature>
<organism>
    <name type="scientific">Mycobacterium bovis (strain BCG / Pasteur 1173P2)</name>
    <dbReference type="NCBI Taxonomy" id="410289"/>
    <lineage>
        <taxon>Bacteria</taxon>
        <taxon>Bacillati</taxon>
        <taxon>Actinomycetota</taxon>
        <taxon>Actinomycetes</taxon>
        <taxon>Mycobacteriales</taxon>
        <taxon>Mycobacteriaceae</taxon>
        <taxon>Mycobacterium</taxon>
        <taxon>Mycobacterium tuberculosis complex</taxon>
    </lineage>
</organism>
<accession>A1KIJ5</accession>
<gene>
    <name evidence="1" type="primary">fmt</name>
    <name type="ordered locus">BCG_1467</name>
</gene>
<name>FMT_MYCBP</name>
<protein>
    <recommendedName>
        <fullName evidence="1">Methionyl-tRNA formyltransferase</fullName>
        <ecNumber evidence="1">2.1.2.9</ecNumber>
    </recommendedName>
</protein>
<keyword id="KW-0648">Protein biosynthesis</keyword>
<keyword id="KW-0808">Transferase</keyword>
<evidence type="ECO:0000255" key="1">
    <source>
        <dbReference type="HAMAP-Rule" id="MF_00182"/>
    </source>
</evidence>
<evidence type="ECO:0000256" key="2">
    <source>
        <dbReference type="SAM" id="MobiDB-lite"/>
    </source>
</evidence>
<reference key="1">
    <citation type="journal article" date="2007" name="Proc. Natl. Acad. Sci. U.S.A.">
        <title>Genome plasticity of BCG and impact on vaccine efficacy.</title>
        <authorList>
            <person name="Brosch R."/>
            <person name="Gordon S.V."/>
            <person name="Garnier T."/>
            <person name="Eiglmeier K."/>
            <person name="Frigui W."/>
            <person name="Valenti P."/>
            <person name="Dos Santos S."/>
            <person name="Duthoy S."/>
            <person name="Lacroix C."/>
            <person name="Garcia-Pelayo C."/>
            <person name="Inwald J.K."/>
            <person name="Golby P."/>
            <person name="Garcia J.N."/>
            <person name="Hewinson R.G."/>
            <person name="Behr M.A."/>
            <person name="Quail M.A."/>
            <person name="Churcher C."/>
            <person name="Barrell B.G."/>
            <person name="Parkhill J."/>
            <person name="Cole S.T."/>
        </authorList>
    </citation>
    <scope>NUCLEOTIDE SEQUENCE [LARGE SCALE GENOMIC DNA]</scope>
    <source>
        <strain>BCG / Pasteur 1173P2</strain>
    </source>
</reference>
<comment type="function">
    <text evidence="1">Attaches a formyl group to the free amino group of methionyl-tRNA(fMet). The formyl group appears to play a dual role in the initiator identity of N-formylmethionyl-tRNA by promoting its recognition by IF2 and preventing the misappropriation of this tRNA by the elongation apparatus.</text>
</comment>
<comment type="catalytic activity">
    <reaction evidence="1">
        <text>L-methionyl-tRNA(fMet) + (6R)-10-formyltetrahydrofolate = N-formyl-L-methionyl-tRNA(fMet) + (6S)-5,6,7,8-tetrahydrofolate + H(+)</text>
        <dbReference type="Rhea" id="RHEA:24380"/>
        <dbReference type="Rhea" id="RHEA-COMP:9952"/>
        <dbReference type="Rhea" id="RHEA-COMP:9953"/>
        <dbReference type="ChEBI" id="CHEBI:15378"/>
        <dbReference type="ChEBI" id="CHEBI:57453"/>
        <dbReference type="ChEBI" id="CHEBI:78530"/>
        <dbReference type="ChEBI" id="CHEBI:78844"/>
        <dbReference type="ChEBI" id="CHEBI:195366"/>
        <dbReference type="EC" id="2.1.2.9"/>
    </reaction>
</comment>
<comment type="similarity">
    <text evidence="1">Belongs to the Fmt family.</text>
</comment>
<dbReference type="EC" id="2.1.2.9" evidence="1"/>
<dbReference type="EMBL" id="AM408590">
    <property type="protein sequence ID" value="CAL71454.1"/>
    <property type="molecule type" value="Genomic_DNA"/>
</dbReference>
<dbReference type="RefSeq" id="WP_003900336.1">
    <property type="nucleotide sequence ID" value="NC_008769.1"/>
</dbReference>
<dbReference type="SMR" id="A1KIJ5"/>
<dbReference type="GeneID" id="45425384"/>
<dbReference type="KEGG" id="mbb:BCG_1467"/>
<dbReference type="HOGENOM" id="CLU_033347_2_0_11"/>
<dbReference type="Proteomes" id="UP000001472">
    <property type="component" value="Chromosome"/>
</dbReference>
<dbReference type="GO" id="GO:0005829">
    <property type="term" value="C:cytosol"/>
    <property type="evidence" value="ECO:0007669"/>
    <property type="project" value="TreeGrafter"/>
</dbReference>
<dbReference type="GO" id="GO:0004479">
    <property type="term" value="F:methionyl-tRNA formyltransferase activity"/>
    <property type="evidence" value="ECO:0007669"/>
    <property type="project" value="UniProtKB-UniRule"/>
</dbReference>
<dbReference type="CDD" id="cd08646">
    <property type="entry name" value="FMT_core_Met-tRNA-FMT_N"/>
    <property type="match status" value="1"/>
</dbReference>
<dbReference type="CDD" id="cd08704">
    <property type="entry name" value="Met_tRNA_FMT_C"/>
    <property type="match status" value="1"/>
</dbReference>
<dbReference type="FunFam" id="3.40.50.12230:FF:000001">
    <property type="entry name" value="Methionyl-tRNA formyltransferase"/>
    <property type="match status" value="1"/>
</dbReference>
<dbReference type="Gene3D" id="3.40.50.12230">
    <property type="match status" value="1"/>
</dbReference>
<dbReference type="HAMAP" id="MF_00182">
    <property type="entry name" value="Formyl_trans"/>
    <property type="match status" value="1"/>
</dbReference>
<dbReference type="InterPro" id="IPR005794">
    <property type="entry name" value="Fmt"/>
</dbReference>
<dbReference type="InterPro" id="IPR005793">
    <property type="entry name" value="Formyl_trans_C"/>
</dbReference>
<dbReference type="InterPro" id="IPR002376">
    <property type="entry name" value="Formyl_transf_N"/>
</dbReference>
<dbReference type="InterPro" id="IPR036477">
    <property type="entry name" value="Formyl_transf_N_sf"/>
</dbReference>
<dbReference type="InterPro" id="IPR011034">
    <property type="entry name" value="Formyl_transferase-like_C_sf"/>
</dbReference>
<dbReference type="InterPro" id="IPR044135">
    <property type="entry name" value="Met-tRNA-FMT_C"/>
</dbReference>
<dbReference type="InterPro" id="IPR041711">
    <property type="entry name" value="Met-tRNA-FMT_N"/>
</dbReference>
<dbReference type="NCBIfam" id="TIGR00460">
    <property type="entry name" value="fmt"/>
    <property type="match status" value="1"/>
</dbReference>
<dbReference type="PANTHER" id="PTHR11138">
    <property type="entry name" value="METHIONYL-TRNA FORMYLTRANSFERASE"/>
    <property type="match status" value="1"/>
</dbReference>
<dbReference type="PANTHER" id="PTHR11138:SF5">
    <property type="entry name" value="METHIONYL-TRNA FORMYLTRANSFERASE, MITOCHONDRIAL"/>
    <property type="match status" value="1"/>
</dbReference>
<dbReference type="Pfam" id="PF02911">
    <property type="entry name" value="Formyl_trans_C"/>
    <property type="match status" value="1"/>
</dbReference>
<dbReference type="Pfam" id="PF00551">
    <property type="entry name" value="Formyl_trans_N"/>
    <property type="match status" value="1"/>
</dbReference>
<dbReference type="SUPFAM" id="SSF50486">
    <property type="entry name" value="FMT C-terminal domain-like"/>
    <property type="match status" value="1"/>
</dbReference>
<dbReference type="SUPFAM" id="SSF53328">
    <property type="entry name" value="Formyltransferase"/>
    <property type="match status" value="1"/>
</dbReference>